<gene>
    <name type="ORF">101</name>
</gene>
<dbReference type="EMBL" id="AJ414696">
    <property type="protein sequence ID" value="CAC93973.1"/>
    <property type="molecule type" value="Genomic_DNA"/>
</dbReference>
<dbReference type="EMBL" id="AJ748296">
    <property type="protein sequence ID" value="CAG38837.1"/>
    <property type="molecule type" value="Genomic_DNA"/>
</dbReference>
<dbReference type="RefSeq" id="NP_666606.1">
    <property type="nucleotide sequence ID" value="NC_004087.1"/>
</dbReference>
<dbReference type="KEGG" id="vg:951372"/>
<dbReference type="OrthoDB" id="18001at10239"/>
<dbReference type="Proteomes" id="UP000002270">
    <property type="component" value="Genome"/>
</dbReference>
<dbReference type="Proteomes" id="UP000223181">
    <property type="component" value="Segment"/>
</dbReference>
<organismHost>
    <name type="scientific">Saccharolobus islandicus</name>
    <name type="common">Sulfolobus islandicus</name>
    <dbReference type="NCBI Taxonomy" id="43080"/>
</organismHost>
<reference key="1">
    <citation type="journal article" date="2001" name="Virology">
        <title>Sequences and replication of genomes of the archaeal rudiviruses SIRV1 and SIRV2: relationships to the archaeal lipothrixvirus SIFV and some eukaryal viruses.</title>
        <authorList>
            <person name="Peng X."/>
            <person name="Blum H."/>
            <person name="She Q."/>
            <person name="Mallok S."/>
            <person name="Bruegger K."/>
            <person name="Garrett R.A."/>
            <person name="Zillig W."/>
            <person name="Prangishvili D."/>
        </authorList>
    </citation>
    <scope>NUCLEOTIDE SEQUENCE [LARGE SCALE GENOMIC DNA]</scope>
    <source>
        <strain>Isolate variant VIII</strain>
    </source>
</reference>
<reference key="2">
    <citation type="journal article" date="2004" name="Mol. Microbiol.">
        <title>Multiple variants of the archaeal DNA rudivirus SIRV1 in a single host and a novel mechanism of genomic variation.</title>
        <authorList>
            <person name="Peng X."/>
            <person name="Kessler A."/>
            <person name="Phan H."/>
            <person name="Garrett R.A."/>
            <person name="Prangishvili D."/>
        </authorList>
    </citation>
    <scope>NUCLEOTIDE SEQUENCE [LARGE SCALE GENOMIC DNA]</scope>
    <source>
        <strain>Isolate variant XX</strain>
    </source>
</reference>
<feature type="chain" id="PRO_0000342315" description="Uncharacterized protein 101">
    <location>
        <begin position="1"/>
        <end position="101"/>
    </location>
</feature>
<feature type="sequence variant" description="In strain: Isolate variant XX.">
    <original>SNN</original>
    <variation>NDS</variation>
    <location>
        <begin position="99"/>
        <end position="101"/>
    </location>
</feature>
<proteinExistence type="predicted"/>
<name>Y101_SIRV1</name>
<sequence length="101" mass="12470">MEIDIKNECRKYIIQFRNWLESRYSDNIYFFNVFEDEEIILMQIKINMKKKEYEKAGMSMLKYLVRTFKYPNYIKVNWRYDKNMFKISAICGDINMSESNN</sequence>
<organism>
    <name type="scientific">Sulfolobus islandicus rod-shaped virus 1</name>
    <name type="common">SIRV-1</name>
    <name type="synonym">Sulfolobus virus SIRV-1</name>
    <dbReference type="NCBI Taxonomy" id="157898"/>
    <lineage>
        <taxon>Viruses</taxon>
        <taxon>Adnaviria</taxon>
        <taxon>Zilligvirae</taxon>
        <taxon>Taleaviricota</taxon>
        <taxon>Tokiviricetes</taxon>
        <taxon>Ligamenvirales</taxon>
        <taxon>Rudiviridae</taxon>
        <taxon>Icerudivirus</taxon>
        <taxon>Icerudivirus SIRV1</taxon>
    </lineage>
</organism>
<keyword id="KW-1185">Reference proteome</keyword>
<accession>Q8QL37</accession>
<accession>Q5TJA1</accession>
<protein>
    <recommendedName>
        <fullName>Uncharacterized protein 101</fullName>
    </recommendedName>
</protein>